<dbReference type="EMBL" id="AL096770">
    <property type="protein sequence ID" value="CAB65799.1"/>
    <property type="molecule type" value="Genomic_DNA"/>
</dbReference>
<dbReference type="EMBL" id="AL662857">
    <property type="status" value="NOT_ANNOTATED_CDS"/>
    <property type="molecule type" value="Genomic_DNA"/>
</dbReference>
<dbReference type="EMBL" id="AL662781">
    <property type="status" value="NOT_ANNOTATED_CDS"/>
    <property type="molecule type" value="Genomic_DNA"/>
</dbReference>
<dbReference type="EMBL" id="BX005432">
    <property type="status" value="NOT_ANNOTATED_CDS"/>
    <property type="molecule type" value="Genomic_DNA"/>
</dbReference>
<dbReference type="EMBL" id="CR753509">
    <property type="status" value="NOT_ANNOTATED_CDS"/>
    <property type="molecule type" value="Genomic_DNA"/>
</dbReference>
<dbReference type="EMBL" id="CR759808">
    <property type="status" value="NOT_ANNOTATED_CDS"/>
    <property type="molecule type" value="Genomic_DNA"/>
</dbReference>
<dbReference type="EMBL" id="CR936918">
    <property type="status" value="NOT_ANNOTATED_CDS"/>
    <property type="molecule type" value="Genomic_DNA"/>
</dbReference>
<dbReference type="EMBL" id="BX927232">
    <property type="status" value="NOT_ANNOTATED_CDS"/>
    <property type="molecule type" value="Genomic_DNA"/>
</dbReference>
<dbReference type="EMBL" id="BC136905">
    <property type="protein sequence ID" value="AAI36906.1"/>
    <property type="molecule type" value="mRNA"/>
</dbReference>
<dbReference type="EMBL" id="BK004441">
    <property type="protein sequence ID" value="DAA04839.1"/>
    <property type="molecule type" value="Genomic_DNA"/>
</dbReference>
<dbReference type="CCDS" id="CCDS34362.1"/>
<dbReference type="RefSeq" id="NP_112208.1">
    <property type="nucleotide sequence ID" value="NM_030946.2"/>
</dbReference>
<dbReference type="SMR" id="Q9UGF5"/>
<dbReference type="BioGRID" id="138088">
    <property type="interactions" value="3"/>
</dbReference>
<dbReference type="FunCoup" id="Q9UGF5">
    <property type="interactions" value="451"/>
</dbReference>
<dbReference type="IntAct" id="Q9UGF5">
    <property type="interactions" value="3"/>
</dbReference>
<dbReference type="STRING" id="9606.ENSP00000492893"/>
<dbReference type="GlyCosmos" id="Q9UGF5">
    <property type="glycosylation" value="1 site, No reported glycans"/>
</dbReference>
<dbReference type="GlyGen" id="Q9UGF5">
    <property type="glycosylation" value="1 site"/>
</dbReference>
<dbReference type="BioMuta" id="OR14J1"/>
<dbReference type="DMDM" id="14423824"/>
<dbReference type="PaxDb" id="9606-ENSP00000366365"/>
<dbReference type="Antibodypedia" id="50346">
    <property type="antibodies" value="90 antibodies from 23 providers"/>
</dbReference>
<dbReference type="DNASU" id="442191"/>
<dbReference type="Ensembl" id="ENST00000230221.5">
    <property type="protein sequence ID" value="ENSP00000230221.4"/>
    <property type="gene ID" value="ENSG00000112459.5"/>
</dbReference>
<dbReference type="Ensembl" id="ENST00000377160.4">
    <property type="protein sequence ID" value="ENSP00000366365.2"/>
    <property type="gene ID" value="ENSG00000204695.4"/>
</dbReference>
<dbReference type="Ensembl" id="ENST00000420495.4">
    <property type="protein sequence ID" value="ENSP00000389802.3"/>
    <property type="gene ID" value="ENSG00000236927.4"/>
</dbReference>
<dbReference type="Ensembl" id="ENST00000421489.4">
    <property type="protein sequence ID" value="ENSP00000403553.3"/>
    <property type="gene ID" value="ENSG00000234195.4"/>
</dbReference>
<dbReference type="Ensembl" id="ENST00000434778.4">
    <property type="protein sequence ID" value="ENSP00000398851.3"/>
    <property type="gene ID" value="ENSG00000225291.4"/>
</dbReference>
<dbReference type="Ensembl" id="ENST00000435798.4">
    <property type="protein sequence ID" value="ENSP00000400501.3"/>
    <property type="gene ID" value="ENSG00000234100.4"/>
</dbReference>
<dbReference type="Ensembl" id="ENST00000451272.4">
    <property type="protein sequence ID" value="ENSP00000408647.3"/>
    <property type="gene ID" value="ENSG00000237777.4"/>
</dbReference>
<dbReference type="Ensembl" id="ENST00000641895.1">
    <property type="protein sequence ID" value="ENSP00000492893.1"/>
    <property type="gene ID" value="ENSG00000204695.4"/>
</dbReference>
<dbReference type="GeneID" id="442191"/>
<dbReference type="KEGG" id="hsa:442191"/>
<dbReference type="MANE-Select" id="ENST00000641895.1">
    <property type="protein sequence ID" value="ENSP00000492893.1"/>
    <property type="RefSeq nucleotide sequence ID" value="NM_030946.2"/>
    <property type="RefSeq protein sequence ID" value="NP_112208.1"/>
</dbReference>
<dbReference type="UCSC" id="uc011dln.2">
    <property type="organism name" value="human"/>
</dbReference>
<dbReference type="AGR" id="HGNC:13971"/>
<dbReference type="CTD" id="442191"/>
<dbReference type="DisGeNET" id="442191"/>
<dbReference type="GeneCards" id="OR14J1"/>
<dbReference type="HGNC" id="HGNC:13971">
    <property type="gene designation" value="OR14J1"/>
</dbReference>
<dbReference type="HPA" id="ENSG00000204695">
    <property type="expression patterns" value="Tissue enhanced (retina)"/>
</dbReference>
<dbReference type="neXtProt" id="NX_Q9UGF5"/>
<dbReference type="OpenTargets" id="ENSG00000204695"/>
<dbReference type="PharmGKB" id="PA162398444"/>
<dbReference type="VEuPathDB" id="HostDB:ENSG00000204695"/>
<dbReference type="eggNOG" id="ENOG502SHXQ">
    <property type="taxonomic scope" value="Eukaryota"/>
</dbReference>
<dbReference type="GeneTree" id="ENSGT01050000244828"/>
<dbReference type="HOGENOM" id="CLU_012526_1_0_1"/>
<dbReference type="InParanoid" id="Q9UGF5"/>
<dbReference type="OMA" id="SAMDLMF"/>
<dbReference type="OrthoDB" id="9830543at2759"/>
<dbReference type="PAN-GO" id="Q9UGF5">
    <property type="GO annotations" value="2 GO annotations based on evolutionary models"/>
</dbReference>
<dbReference type="PhylomeDB" id="Q9UGF5"/>
<dbReference type="TreeFam" id="TF352740"/>
<dbReference type="PathwayCommons" id="Q9UGF5"/>
<dbReference type="Reactome" id="R-HSA-381753">
    <property type="pathway name" value="Olfactory Signaling Pathway"/>
</dbReference>
<dbReference type="Reactome" id="R-HSA-9752946">
    <property type="pathway name" value="Expression and translocation of olfactory receptors"/>
</dbReference>
<dbReference type="BioGRID-ORCS" id="442191">
    <property type="hits" value="7 hits in 744 CRISPR screens"/>
</dbReference>
<dbReference type="GeneWiki" id="OR5U1"/>
<dbReference type="GenomeRNAi" id="442191"/>
<dbReference type="Pharos" id="Q9UGF5">
    <property type="development level" value="Tdark"/>
</dbReference>
<dbReference type="PRO" id="PR:Q9UGF5"/>
<dbReference type="Proteomes" id="UP000005640">
    <property type="component" value="Chromosome 6"/>
</dbReference>
<dbReference type="RNAct" id="Q9UGF5">
    <property type="molecule type" value="protein"/>
</dbReference>
<dbReference type="Bgee" id="ENSG00000204695">
    <property type="expression patterns" value="Expressed in testis and 2 other cell types or tissues"/>
</dbReference>
<dbReference type="ExpressionAtlas" id="Q9UGF5">
    <property type="expression patterns" value="baseline and differential"/>
</dbReference>
<dbReference type="GO" id="GO:0005886">
    <property type="term" value="C:plasma membrane"/>
    <property type="evidence" value="ECO:0000304"/>
    <property type="project" value="Reactome"/>
</dbReference>
<dbReference type="GO" id="GO:0004930">
    <property type="term" value="F:G protein-coupled receptor activity"/>
    <property type="evidence" value="ECO:0007669"/>
    <property type="project" value="UniProtKB-KW"/>
</dbReference>
<dbReference type="GO" id="GO:0005549">
    <property type="term" value="F:odorant binding"/>
    <property type="evidence" value="ECO:0000318"/>
    <property type="project" value="GO_Central"/>
</dbReference>
<dbReference type="GO" id="GO:0004984">
    <property type="term" value="F:olfactory receptor activity"/>
    <property type="evidence" value="ECO:0000318"/>
    <property type="project" value="GO_Central"/>
</dbReference>
<dbReference type="CDD" id="cd15227">
    <property type="entry name" value="7tmA_OR14-like"/>
    <property type="match status" value="1"/>
</dbReference>
<dbReference type="FunFam" id="1.10.1220.70:FF:000001">
    <property type="entry name" value="Olfactory receptor"/>
    <property type="match status" value="1"/>
</dbReference>
<dbReference type="FunFam" id="1.20.1070.10:FF:000037">
    <property type="entry name" value="Olfactory receptor"/>
    <property type="match status" value="1"/>
</dbReference>
<dbReference type="Gene3D" id="1.20.1070.10">
    <property type="entry name" value="Rhodopsin 7-helix transmembrane proteins"/>
    <property type="match status" value="1"/>
</dbReference>
<dbReference type="InterPro" id="IPR000276">
    <property type="entry name" value="GPCR_Rhodpsn"/>
</dbReference>
<dbReference type="InterPro" id="IPR017452">
    <property type="entry name" value="GPCR_Rhodpsn_7TM"/>
</dbReference>
<dbReference type="InterPro" id="IPR000725">
    <property type="entry name" value="Olfact_rcpt"/>
</dbReference>
<dbReference type="InterPro" id="IPR050516">
    <property type="entry name" value="Olfactory_GPCR"/>
</dbReference>
<dbReference type="PANTHER" id="PTHR26452">
    <property type="entry name" value="OLFACTORY RECEPTOR"/>
    <property type="match status" value="1"/>
</dbReference>
<dbReference type="Pfam" id="PF13853">
    <property type="entry name" value="7tm_4"/>
    <property type="match status" value="1"/>
</dbReference>
<dbReference type="PRINTS" id="PR00237">
    <property type="entry name" value="GPCRRHODOPSN"/>
</dbReference>
<dbReference type="PRINTS" id="PR00245">
    <property type="entry name" value="OLFACTORYR"/>
</dbReference>
<dbReference type="SUPFAM" id="SSF81321">
    <property type="entry name" value="Family A G protein-coupled receptor-like"/>
    <property type="match status" value="1"/>
</dbReference>
<dbReference type="PROSITE" id="PS00237">
    <property type="entry name" value="G_PROTEIN_RECEP_F1_1"/>
    <property type="match status" value="1"/>
</dbReference>
<dbReference type="PROSITE" id="PS50262">
    <property type="entry name" value="G_PROTEIN_RECEP_F1_2"/>
    <property type="match status" value="1"/>
</dbReference>
<accession>Q9UGF5</accession>
<accession>A2BEC2</accession>
<accession>B0V078</accession>
<accession>Q5ST27</accession>
<organism>
    <name type="scientific">Homo sapiens</name>
    <name type="common">Human</name>
    <dbReference type="NCBI Taxonomy" id="9606"/>
    <lineage>
        <taxon>Eukaryota</taxon>
        <taxon>Metazoa</taxon>
        <taxon>Chordata</taxon>
        <taxon>Craniata</taxon>
        <taxon>Vertebrata</taxon>
        <taxon>Euteleostomi</taxon>
        <taxon>Mammalia</taxon>
        <taxon>Eutheria</taxon>
        <taxon>Euarchontoglires</taxon>
        <taxon>Primates</taxon>
        <taxon>Haplorrhini</taxon>
        <taxon>Catarrhini</taxon>
        <taxon>Hominidae</taxon>
        <taxon>Homo</taxon>
    </lineage>
</organism>
<reference key="1">
    <citation type="journal article" date="2003" name="Nature">
        <title>The DNA sequence and analysis of human chromosome 6.</title>
        <authorList>
            <person name="Mungall A.J."/>
            <person name="Palmer S.A."/>
            <person name="Sims S.K."/>
            <person name="Edwards C.A."/>
            <person name="Ashurst J.L."/>
            <person name="Wilming L."/>
            <person name="Jones M.C."/>
            <person name="Horton R."/>
            <person name="Hunt S.E."/>
            <person name="Scott C.E."/>
            <person name="Gilbert J.G.R."/>
            <person name="Clamp M.E."/>
            <person name="Bethel G."/>
            <person name="Milne S."/>
            <person name="Ainscough R."/>
            <person name="Almeida J.P."/>
            <person name="Ambrose K.D."/>
            <person name="Andrews T.D."/>
            <person name="Ashwell R.I.S."/>
            <person name="Babbage A.K."/>
            <person name="Bagguley C.L."/>
            <person name="Bailey J."/>
            <person name="Banerjee R."/>
            <person name="Barker D.J."/>
            <person name="Barlow K.F."/>
            <person name="Bates K."/>
            <person name="Beare D.M."/>
            <person name="Beasley H."/>
            <person name="Beasley O."/>
            <person name="Bird C.P."/>
            <person name="Blakey S.E."/>
            <person name="Bray-Allen S."/>
            <person name="Brook J."/>
            <person name="Brown A.J."/>
            <person name="Brown J.Y."/>
            <person name="Burford D.C."/>
            <person name="Burrill W."/>
            <person name="Burton J."/>
            <person name="Carder C."/>
            <person name="Carter N.P."/>
            <person name="Chapman J.C."/>
            <person name="Clark S.Y."/>
            <person name="Clark G."/>
            <person name="Clee C.M."/>
            <person name="Clegg S."/>
            <person name="Cobley V."/>
            <person name="Collier R.E."/>
            <person name="Collins J.E."/>
            <person name="Colman L.K."/>
            <person name="Corby N.R."/>
            <person name="Coville G.J."/>
            <person name="Culley K.M."/>
            <person name="Dhami P."/>
            <person name="Davies J."/>
            <person name="Dunn M."/>
            <person name="Earthrowl M.E."/>
            <person name="Ellington A.E."/>
            <person name="Evans K.A."/>
            <person name="Faulkner L."/>
            <person name="Francis M.D."/>
            <person name="Frankish A."/>
            <person name="Frankland J."/>
            <person name="French L."/>
            <person name="Garner P."/>
            <person name="Garnett J."/>
            <person name="Ghori M.J."/>
            <person name="Gilby L.M."/>
            <person name="Gillson C.J."/>
            <person name="Glithero R.J."/>
            <person name="Grafham D.V."/>
            <person name="Grant M."/>
            <person name="Gribble S."/>
            <person name="Griffiths C."/>
            <person name="Griffiths M.N.D."/>
            <person name="Hall R."/>
            <person name="Halls K.S."/>
            <person name="Hammond S."/>
            <person name="Harley J.L."/>
            <person name="Hart E.A."/>
            <person name="Heath P.D."/>
            <person name="Heathcott R."/>
            <person name="Holmes S.J."/>
            <person name="Howden P.J."/>
            <person name="Howe K.L."/>
            <person name="Howell G.R."/>
            <person name="Huckle E."/>
            <person name="Humphray S.J."/>
            <person name="Humphries M.D."/>
            <person name="Hunt A.R."/>
            <person name="Johnson C.M."/>
            <person name="Joy A.A."/>
            <person name="Kay M."/>
            <person name="Keenan S.J."/>
            <person name="Kimberley A.M."/>
            <person name="King A."/>
            <person name="Laird G.K."/>
            <person name="Langford C."/>
            <person name="Lawlor S."/>
            <person name="Leongamornlert D.A."/>
            <person name="Leversha M."/>
            <person name="Lloyd C.R."/>
            <person name="Lloyd D.M."/>
            <person name="Loveland J.E."/>
            <person name="Lovell J."/>
            <person name="Martin S."/>
            <person name="Mashreghi-Mohammadi M."/>
            <person name="Maslen G.L."/>
            <person name="Matthews L."/>
            <person name="McCann O.T."/>
            <person name="McLaren S.J."/>
            <person name="McLay K."/>
            <person name="McMurray A."/>
            <person name="Moore M.J.F."/>
            <person name="Mullikin J.C."/>
            <person name="Niblett D."/>
            <person name="Nickerson T."/>
            <person name="Novik K.L."/>
            <person name="Oliver K."/>
            <person name="Overton-Larty E.K."/>
            <person name="Parker A."/>
            <person name="Patel R."/>
            <person name="Pearce A.V."/>
            <person name="Peck A.I."/>
            <person name="Phillimore B.J.C.T."/>
            <person name="Phillips S."/>
            <person name="Plumb R.W."/>
            <person name="Porter K.M."/>
            <person name="Ramsey Y."/>
            <person name="Ranby S.A."/>
            <person name="Rice C.M."/>
            <person name="Ross M.T."/>
            <person name="Searle S.M."/>
            <person name="Sehra H.K."/>
            <person name="Sheridan E."/>
            <person name="Skuce C.D."/>
            <person name="Smith S."/>
            <person name="Smith M."/>
            <person name="Spraggon L."/>
            <person name="Squares S.L."/>
            <person name="Steward C.A."/>
            <person name="Sycamore N."/>
            <person name="Tamlyn-Hall G."/>
            <person name="Tester J."/>
            <person name="Theaker A.J."/>
            <person name="Thomas D.W."/>
            <person name="Thorpe A."/>
            <person name="Tracey A."/>
            <person name="Tromans A."/>
            <person name="Tubby B."/>
            <person name="Wall M."/>
            <person name="Wallis J.M."/>
            <person name="West A.P."/>
            <person name="White S.S."/>
            <person name="Whitehead S.L."/>
            <person name="Whittaker H."/>
            <person name="Wild A."/>
            <person name="Willey D.J."/>
            <person name="Wilmer T.E."/>
            <person name="Wood J.M."/>
            <person name="Wray P.W."/>
            <person name="Wyatt J.C."/>
            <person name="Young L."/>
            <person name="Younger R.M."/>
            <person name="Bentley D.R."/>
            <person name="Coulson A."/>
            <person name="Durbin R.M."/>
            <person name="Hubbard T."/>
            <person name="Sulston J.E."/>
            <person name="Dunham I."/>
            <person name="Rogers J."/>
            <person name="Beck S."/>
        </authorList>
    </citation>
    <scope>NUCLEOTIDE SEQUENCE [LARGE SCALE GENOMIC DNA]</scope>
    <scope>VARIANT THR-7</scope>
</reference>
<reference key="2">
    <citation type="journal article" date="2004" name="Genome Res.">
        <title>The status, quality, and expansion of the NIH full-length cDNA project: the Mammalian Gene Collection (MGC).</title>
        <authorList>
            <consortium name="The MGC Project Team"/>
        </authorList>
    </citation>
    <scope>NUCLEOTIDE SEQUENCE [LARGE SCALE MRNA]</scope>
</reference>
<reference key="3">
    <citation type="journal article" date="2004" name="Proc. Natl. Acad. Sci. U.S.A.">
        <title>The human olfactory receptor gene family.</title>
        <authorList>
            <person name="Malnic B."/>
            <person name="Godfrey P.A."/>
            <person name="Buck L.B."/>
        </authorList>
    </citation>
    <scope>IDENTIFICATION</scope>
</reference>
<reference key="4">
    <citation type="journal article" date="2004" name="Proc. Natl. Acad. Sci. U.S.A.">
        <authorList>
            <person name="Malnic B."/>
            <person name="Godfrey P.A."/>
            <person name="Buck L.B."/>
        </authorList>
    </citation>
    <scope>ERRATUM OF PUBMED:14983052</scope>
</reference>
<comment type="function">
    <text evidence="4">Odorant receptor.</text>
</comment>
<comment type="subcellular location">
    <subcellularLocation>
        <location>Cell membrane</location>
        <topology>Multi-pass membrane protein</topology>
    </subcellularLocation>
</comment>
<comment type="similarity">
    <text evidence="2">Belongs to the G-protein coupled receptor 1 family.</text>
</comment>
<comment type="online information" name="Human Olfactory Receptor Data Exploratorium (HORDE)">
    <link uri="http://genome.weizmann.ac.il/horde/card/index/symbol:OR14J1"/>
</comment>
<feature type="chain" id="PRO_0000150616" description="Olfactory receptor 14J1">
    <location>
        <begin position="1"/>
        <end position="321"/>
    </location>
</feature>
<feature type="topological domain" description="Extracellular" evidence="1">
    <location>
        <begin position="1"/>
        <end position="23"/>
    </location>
</feature>
<feature type="transmembrane region" description="Helical; Name=1" evidence="1">
    <location>
        <begin position="24"/>
        <end position="44"/>
    </location>
</feature>
<feature type="topological domain" description="Cytoplasmic" evidence="1">
    <location>
        <begin position="45"/>
        <end position="52"/>
    </location>
</feature>
<feature type="transmembrane region" description="Helical; Name=2" evidence="1">
    <location>
        <begin position="53"/>
        <end position="73"/>
    </location>
</feature>
<feature type="topological domain" description="Extracellular" evidence="1">
    <location>
        <begin position="74"/>
        <end position="97"/>
    </location>
</feature>
<feature type="transmembrane region" description="Helical; Name=3" evidence="1">
    <location>
        <begin position="98"/>
        <end position="118"/>
    </location>
</feature>
<feature type="topological domain" description="Cytoplasmic" evidence="1">
    <location>
        <begin position="119"/>
        <end position="137"/>
    </location>
</feature>
<feature type="transmembrane region" description="Helical; Name=4" evidence="1">
    <location>
        <begin position="138"/>
        <end position="158"/>
    </location>
</feature>
<feature type="topological domain" description="Extracellular" evidence="1">
    <location>
        <begin position="159"/>
        <end position="194"/>
    </location>
</feature>
<feature type="transmembrane region" description="Helical; Name=5" evidence="1">
    <location>
        <begin position="195"/>
        <end position="215"/>
    </location>
</feature>
<feature type="topological domain" description="Cytoplasmic" evidence="1">
    <location>
        <begin position="216"/>
        <end position="235"/>
    </location>
</feature>
<feature type="transmembrane region" description="Helical; Name=6" evidence="1">
    <location>
        <begin position="236"/>
        <end position="256"/>
    </location>
</feature>
<feature type="topological domain" description="Extracellular" evidence="1">
    <location>
        <begin position="257"/>
        <end position="269"/>
    </location>
</feature>
<feature type="transmembrane region" description="Helical; Name=7" evidence="1">
    <location>
        <begin position="270"/>
        <end position="290"/>
    </location>
</feature>
<feature type="topological domain" description="Cytoplasmic" evidence="1">
    <location>
        <begin position="291"/>
        <end position="321"/>
    </location>
</feature>
<feature type="glycosylation site" description="N-linked (GlcNAc...) asparagine" evidence="1">
    <location>
        <position position="3"/>
    </location>
</feature>
<feature type="disulfide bond" evidence="2">
    <location>
        <begin position="95"/>
        <end position="187"/>
    </location>
</feature>
<feature type="sequence variant" id="VAR_034234" description="In dbSNP:rs9257694." evidence="3">
    <original>M</original>
    <variation>T</variation>
    <location>
        <position position="7"/>
    </location>
</feature>
<feature type="sequence variant" id="VAR_034235" description="In dbSNP:rs17404424.">
    <original>V</original>
    <variation>M</variation>
    <location>
        <position position="278"/>
    </location>
</feature>
<evidence type="ECO:0000255" key="1"/>
<evidence type="ECO:0000255" key="2">
    <source>
        <dbReference type="PROSITE-ProRule" id="PRU00521"/>
    </source>
</evidence>
<evidence type="ECO:0000269" key="3">
    <source>
    </source>
</evidence>
<evidence type="ECO:0000305" key="4"/>
<sequence>MVNLTSMSGFLLMGFSDERKLQILHALVFLVTYLLALTGNLLIITIITVDRRLHSPMYYFLKHLSLLDLCFISVTVPQSIANSLMGNGYISLVQCILQVFFFIALASSEVAILTVMSYDRYAAICQPLHYETIMDPRACRHAVIAVWIAGGLSGLMHAAINFSIPLCGKRVIHQFFCDVPQMLKLACSYEFINEIALAAFTTSAAFICLISIVLSYIRIFSTVLRIPSAEGRTKVFSTCLPHLFVATFFLSAAGFEFLRLPSDSSSTVDLVFSVFYTVIPPTLNPVIYSLRNDSMKAALRKMLSKEELPQRKMCLKAMFKL</sequence>
<proteinExistence type="evidence at transcript level"/>
<keyword id="KW-1003">Cell membrane</keyword>
<keyword id="KW-1015">Disulfide bond</keyword>
<keyword id="KW-0297">G-protein coupled receptor</keyword>
<keyword id="KW-0325">Glycoprotein</keyword>
<keyword id="KW-0472">Membrane</keyword>
<keyword id="KW-0552">Olfaction</keyword>
<keyword id="KW-0675">Receptor</keyword>
<keyword id="KW-1185">Reference proteome</keyword>
<keyword id="KW-0716">Sensory transduction</keyword>
<keyword id="KW-0807">Transducer</keyword>
<keyword id="KW-0812">Transmembrane</keyword>
<keyword id="KW-1133">Transmembrane helix</keyword>
<name>O14J1_HUMAN</name>
<gene>
    <name type="primary">OR14J1</name>
    <name type="synonym">OR5U1</name>
</gene>
<protein>
    <recommendedName>
        <fullName>Olfactory receptor 14J1</fullName>
    </recommendedName>
    <alternativeName>
        <fullName>Hs6M1-28</fullName>
    </alternativeName>
    <alternativeName>
        <fullName>Olfactory receptor 5U1</fullName>
    </alternativeName>
    <alternativeName>
        <fullName>Olfactory receptor OR6-25</fullName>
    </alternativeName>
</protein>